<evidence type="ECO:0000255" key="1">
    <source>
        <dbReference type="HAMAP-Rule" id="MF_00456"/>
    </source>
</evidence>
<name>PROB_VIBPA</name>
<protein>
    <recommendedName>
        <fullName evidence="1">Glutamate 5-kinase</fullName>
        <ecNumber evidence="1">2.7.2.11</ecNumber>
    </recommendedName>
    <alternativeName>
        <fullName evidence="1">Gamma-glutamyl kinase</fullName>
        <shortName evidence="1">GK</shortName>
    </alternativeName>
</protein>
<dbReference type="EC" id="2.7.2.11" evidence="1"/>
<dbReference type="EMBL" id="BA000031">
    <property type="protein sequence ID" value="BAC58939.1"/>
    <property type="molecule type" value="Genomic_DNA"/>
</dbReference>
<dbReference type="RefSeq" id="NP_797055.1">
    <property type="nucleotide sequence ID" value="NC_004603.1"/>
</dbReference>
<dbReference type="RefSeq" id="WP_005483011.1">
    <property type="nucleotide sequence ID" value="NC_004603.1"/>
</dbReference>
<dbReference type="SMR" id="Q87RV0"/>
<dbReference type="GeneID" id="1188151"/>
<dbReference type="KEGG" id="vpa:VP0676"/>
<dbReference type="PATRIC" id="fig|223926.6.peg.644"/>
<dbReference type="eggNOG" id="COG0263">
    <property type="taxonomic scope" value="Bacteria"/>
</dbReference>
<dbReference type="HOGENOM" id="CLU_025400_2_0_6"/>
<dbReference type="UniPathway" id="UPA00098">
    <property type="reaction ID" value="UER00359"/>
</dbReference>
<dbReference type="Proteomes" id="UP000002493">
    <property type="component" value="Chromosome 1"/>
</dbReference>
<dbReference type="GO" id="GO:0005829">
    <property type="term" value="C:cytosol"/>
    <property type="evidence" value="ECO:0007669"/>
    <property type="project" value="TreeGrafter"/>
</dbReference>
<dbReference type="GO" id="GO:0005524">
    <property type="term" value="F:ATP binding"/>
    <property type="evidence" value="ECO:0007669"/>
    <property type="project" value="UniProtKB-KW"/>
</dbReference>
<dbReference type="GO" id="GO:0004349">
    <property type="term" value="F:glutamate 5-kinase activity"/>
    <property type="evidence" value="ECO:0007669"/>
    <property type="project" value="UniProtKB-UniRule"/>
</dbReference>
<dbReference type="GO" id="GO:0003723">
    <property type="term" value="F:RNA binding"/>
    <property type="evidence" value="ECO:0007669"/>
    <property type="project" value="InterPro"/>
</dbReference>
<dbReference type="GO" id="GO:0055129">
    <property type="term" value="P:L-proline biosynthetic process"/>
    <property type="evidence" value="ECO:0007669"/>
    <property type="project" value="UniProtKB-UniRule"/>
</dbReference>
<dbReference type="CDD" id="cd04242">
    <property type="entry name" value="AAK_G5K_ProB"/>
    <property type="match status" value="1"/>
</dbReference>
<dbReference type="CDD" id="cd21157">
    <property type="entry name" value="PUA_G5K"/>
    <property type="match status" value="1"/>
</dbReference>
<dbReference type="FunFam" id="2.30.130.10:FF:000007">
    <property type="entry name" value="Glutamate 5-kinase"/>
    <property type="match status" value="1"/>
</dbReference>
<dbReference type="FunFam" id="3.40.1160.10:FF:000006">
    <property type="entry name" value="Glutamate 5-kinase"/>
    <property type="match status" value="1"/>
</dbReference>
<dbReference type="Gene3D" id="3.40.1160.10">
    <property type="entry name" value="Acetylglutamate kinase-like"/>
    <property type="match status" value="2"/>
</dbReference>
<dbReference type="Gene3D" id="2.30.130.10">
    <property type="entry name" value="PUA domain"/>
    <property type="match status" value="1"/>
</dbReference>
<dbReference type="HAMAP" id="MF_00456">
    <property type="entry name" value="ProB"/>
    <property type="match status" value="1"/>
</dbReference>
<dbReference type="InterPro" id="IPR036393">
    <property type="entry name" value="AceGlu_kinase-like_sf"/>
</dbReference>
<dbReference type="InterPro" id="IPR001048">
    <property type="entry name" value="Asp/Glu/Uridylate_kinase"/>
</dbReference>
<dbReference type="InterPro" id="IPR041739">
    <property type="entry name" value="G5K_ProB"/>
</dbReference>
<dbReference type="InterPro" id="IPR001057">
    <property type="entry name" value="Glu/AcGlu_kinase"/>
</dbReference>
<dbReference type="InterPro" id="IPR011529">
    <property type="entry name" value="Glu_5kinase"/>
</dbReference>
<dbReference type="InterPro" id="IPR005715">
    <property type="entry name" value="Glu_5kinase/COase_Synthase"/>
</dbReference>
<dbReference type="InterPro" id="IPR019797">
    <property type="entry name" value="Glutamate_5-kinase_CS"/>
</dbReference>
<dbReference type="InterPro" id="IPR002478">
    <property type="entry name" value="PUA"/>
</dbReference>
<dbReference type="InterPro" id="IPR015947">
    <property type="entry name" value="PUA-like_sf"/>
</dbReference>
<dbReference type="InterPro" id="IPR036974">
    <property type="entry name" value="PUA_sf"/>
</dbReference>
<dbReference type="NCBIfam" id="TIGR01027">
    <property type="entry name" value="proB"/>
    <property type="match status" value="1"/>
</dbReference>
<dbReference type="PANTHER" id="PTHR43654">
    <property type="entry name" value="GLUTAMATE 5-KINASE"/>
    <property type="match status" value="1"/>
</dbReference>
<dbReference type="PANTHER" id="PTHR43654:SF1">
    <property type="entry name" value="ISOPENTENYL PHOSPHATE KINASE"/>
    <property type="match status" value="1"/>
</dbReference>
<dbReference type="Pfam" id="PF00696">
    <property type="entry name" value="AA_kinase"/>
    <property type="match status" value="1"/>
</dbReference>
<dbReference type="Pfam" id="PF01472">
    <property type="entry name" value="PUA"/>
    <property type="match status" value="1"/>
</dbReference>
<dbReference type="PIRSF" id="PIRSF000729">
    <property type="entry name" value="GK"/>
    <property type="match status" value="1"/>
</dbReference>
<dbReference type="PRINTS" id="PR00474">
    <property type="entry name" value="GLU5KINASE"/>
</dbReference>
<dbReference type="SMART" id="SM00359">
    <property type="entry name" value="PUA"/>
    <property type="match status" value="1"/>
</dbReference>
<dbReference type="SUPFAM" id="SSF53633">
    <property type="entry name" value="Carbamate kinase-like"/>
    <property type="match status" value="1"/>
</dbReference>
<dbReference type="SUPFAM" id="SSF88697">
    <property type="entry name" value="PUA domain-like"/>
    <property type="match status" value="1"/>
</dbReference>
<dbReference type="PROSITE" id="PS00902">
    <property type="entry name" value="GLUTAMATE_5_KINASE"/>
    <property type="match status" value="1"/>
</dbReference>
<dbReference type="PROSITE" id="PS50890">
    <property type="entry name" value="PUA"/>
    <property type="match status" value="1"/>
</dbReference>
<sequence>MTTNQQNAVVSQPQTVVVKLGTSVLTGGTLALDRAHMVELARQCAELKKQGHSVVMVSSGAIAAGREHLGYPALPNEMASKQLLAAVGQSRLIQTWESLFGIYGIKIGQMLLTRADLDDRERFLNARDTINALVANDIIPIVNENDAVATSEIKVGDNDNLSALVGILCGADKLLLLTDQKGLFTADPRKDPNAELIKEVKTIDDTLRKIAGGSGTTLGTGGMATKLQAADIARRAGIEVIIAAGSAPNVIFDSLSTEPQGTRFLPCSEALENRKRWILAGPAASGDIIIDDGAVNAVVGKGSSLLAKGVIKVSGDFARGEVARVTNSHGKLVARGISAYSSEDLAKITGKHSKDIISILGHDYGSEVIHRDDLVVIQE</sequence>
<accession>Q87RV0</accession>
<proteinExistence type="inferred from homology"/>
<feature type="chain" id="PRO_0000109753" description="Glutamate 5-kinase">
    <location>
        <begin position="1"/>
        <end position="379"/>
    </location>
</feature>
<feature type="domain" description="PUA" evidence="1">
    <location>
        <begin position="285"/>
        <end position="363"/>
    </location>
</feature>
<feature type="binding site" evidence="1">
    <location>
        <position position="19"/>
    </location>
    <ligand>
        <name>ATP</name>
        <dbReference type="ChEBI" id="CHEBI:30616"/>
    </ligand>
</feature>
<feature type="binding site" evidence="1">
    <location>
        <position position="59"/>
    </location>
    <ligand>
        <name>substrate</name>
    </ligand>
</feature>
<feature type="binding site" evidence="1">
    <location>
        <position position="146"/>
    </location>
    <ligand>
        <name>substrate</name>
    </ligand>
</feature>
<feature type="binding site" evidence="1">
    <location>
        <position position="158"/>
    </location>
    <ligand>
        <name>substrate</name>
    </ligand>
</feature>
<feature type="binding site" evidence="1">
    <location>
        <begin position="178"/>
        <end position="179"/>
    </location>
    <ligand>
        <name>ATP</name>
        <dbReference type="ChEBI" id="CHEBI:30616"/>
    </ligand>
</feature>
<feature type="binding site" evidence="1">
    <location>
        <begin position="220"/>
        <end position="226"/>
    </location>
    <ligand>
        <name>ATP</name>
        <dbReference type="ChEBI" id="CHEBI:30616"/>
    </ligand>
</feature>
<reference key="1">
    <citation type="journal article" date="2003" name="Lancet">
        <title>Genome sequence of Vibrio parahaemolyticus: a pathogenic mechanism distinct from that of V. cholerae.</title>
        <authorList>
            <person name="Makino K."/>
            <person name="Oshima K."/>
            <person name="Kurokawa K."/>
            <person name="Yokoyama K."/>
            <person name="Uda T."/>
            <person name="Tagomori K."/>
            <person name="Iijima Y."/>
            <person name="Najima M."/>
            <person name="Nakano M."/>
            <person name="Yamashita A."/>
            <person name="Kubota Y."/>
            <person name="Kimura S."/>
            <person name="Yasunaga T."/>
            <person name="Honda T."/>
            <person name="Shinagawa H."/>
            <person name="Hattori M."/>
            <person name="Iida T."/>
        </authorList>
    </citation>
    <scope>NUCLEOTIDE SEQUENCE [LARGE SCALE GENOMIC DNA]</scope>
    <source>
        <strain>RIMD 2210633</strain>
    </source>
</reference>
<gene>
    <name evidence="1" type="primary">proB</name>
    <name type="ordered locus">VP0676</name>
</gene>
<keyword id="KW-0028">Amino-acid biosynthesis</keyword>
<keyword id="KW-0067">ATP-binding</keyword>
<keyword id="KW-0963">Cytoplasm</keyword>
<keyword id="KW-0418">Kinase</keyword>
<keyword id="KW-0547">Nucleotide-binding</keyword>
<keyword id="KW-0641">Proline biosynthesis</keyword>
<keyword id="KW-0808">Transferase</keyword>
<organism>
    <name type="scientific">Vibrio parahaemolyticus serotype O3:K6 (strain RIMD 2210633)</name>
    <dbReference type="NCBI Taxonomy" id="223926"/>
    <lineage>
        <taxon>Bacteria</taxon>
        <taxon>Pseudomonadati</taxon>
        <taxon>Pseudomonadota</taxon>
        <taxon>Gammaproteobacteria</taxon>
        <taxon>Vibrionales</taxon>
        <taxon>Vibrionaceae</taxon>
        <taxon>Vibrio</taxon>
    </lineage>
</organism>
<comment type="function">
    <text evidence="1">Catalyzes the transfer of a phosphate group to glutamate to form L-glutamate 5-phosphate.</text>
</comment>
<comment type="catalytic activity">
    <reaction evidence="1">
        <text>L-glutamate + ATP = L-glutamyl 5-phosphate + ADP</text>
        <dbReference type="Rhea" id="RHEA:14877"/>
        <dbReference type="ChEBI" id="CHEBI:29985"/>
        <dbReference type="ChEBI" id="CHEBI:30616"/>
        <dbReference type="ChEBI" id="CHEBI:58274"/>
        <dbReference type="ChEBI" id="CHEBI:456216"/>
        <dbReference type="EC" id="2.7.2.11"/>
    </reaction>
</comment>
<comment type="pathway">
    <text evidence="1">Amino-acid biosynthesis; L-proline biosynthesis; L-glutamate 5-semialdehyde from L-glutamate: step 1/2.</text>
</comment>
<comment type="subcellular location">
    <subcellularLocation>
        <location evidence="1">Cytoplasm</location>
    </subcellularLocation>
</comment>
<comment type="similarity">
    <text evidence="1">Belongs to the glutamate 5-kinase family.</text>
</comment>